<keyword id="KW-0496">Mitochondrion</keyword>
<keyword id="KW-1185">Reference proteome</keyword>
<keyword id="KW-0346">Stress response</keyword>
<keyword id="KW-0809">Transit peptide</keyword>
<accession>Q39818</accession>
<protein>
    <recommendedName>
        <fullName>Heat shock 22 kDa protein, mitochondrial</fullName>
    </recommendedName>
</protein>
<comment type="subcellular location">
    <subcellularLocation>
        <location>Mitochondrion</location>
    </subcellularLocation>
</comment>
<comment type="similarity">
    <text evidence="2">Belongs to the small heat shock protein (HSP20) family.</text>
</comment>
<organism>
    <name type="scientific">Glycine max</name>
    <name type="common">Soybean</name>
    <name type="synonym">Glycine hispida</name>
    <dbReference type="NCBI Taxonomy" id="3847"/>
    <lineage>
        <taxon>Eukaryota</taxon>
        <taxon>Viridiplantae</taxon>
        <taxon>Streptophyta</taxon>
        <taxon>Embryophyta</taxon>
        <taxon>Tracheophyta</taxon>
        <taxon>Spermatophyta</taxon>
        <taxon>Magnoliopsida</taxon>
        <taxon>eudicotyledons</taxon>
        <taxon>Gunneridae</taxon>
        <taxon>Pentapetalae</taxon>
        <taxon>rosids</taxon>
        <taxon>fabids</taxon>
        <taxon>Fabales</taxon>
        <taxon>Fabaceae</taxon>
        <taxon>Papilionoideae</taxon>
        <taxon>50 kb inversion clade</taxon>
        <taxon>NPAAA clade</taxon>
        <taxon>indigoferoid/millettioid clade</taxon>
        <taxon>Phaseoleae</taxon>
        <taxon>Glycine</taxon>
        <taxon>Glycine subgen. Soja</taxon>
    </lineage>
</organism>
<feature type="transit peptide" description="Mitochondrion" evidence="1">
    <location>
        <begin position="1"/>
        <end position="31"/>
    </location>
</feature>
<feature type="chain" id="PRO_0000013534" description="Heat shock 22 kDa protein, mitochondrial">
    <location>
        <begin position="32"/>
        <end position="211"/>
    </location>
</feature>
<feature type="domain" description="sHSP" evidence="2">
    <location>
        <begin position="105"/>
        <end position="211"/>
    </location>
</feature>
<sequence>MASSLIAKRFLSSSLLSRSLLRPAASASHRSFDTNAMRQYDNRADDHSTDIDRHSERSFPSTARRDDIFLRCVGSIFSDSEFEPGSEHDGPGHGQSVPLRVARDRSWRWSGRGWDARETEDALHLRVDMPGLAKEDVKISVEQNTLIIKGEGAKEGDEEESARRYTSRIDLPDKLYKIDQIRAEMKNGVLKVVVPKMKEEERKDVISVKVE</sequence>
<gene>
    <name type="primary">HSP23.9</name>
</gene>
<reference key="1">
    <citation type="journal article" date="1996" name="Plant Mol. Biol.">
        <title>Molecular characterization of cDNAs encoding low-molecular-weight heat shock proteins of soybean.</title>
        <authorList>
            <person name="Lafayette P.R."/>
            <person name="Nagao R.T."/>
            <person name="O'Grady K."/>
            <person name="Vierling E."/>
            <person name="Key J.L."/>
        </authorList>
    </citation>
    <scope>NUCLEOTIDE SEQUENCE [MRNA]</scope>
</reference>
<dbReference type="EMBL" id="U21722">
    <property type="protein sequence ID" value="AAB03096.1"/>
    <property type="molecule type" value="mRNA"/>
</dbReference>
<dbReference type="PIR" id="S65049">
    <property type="entry name" value="S65049"/>
</dbReference>
<dbReference type="RefSeq" id="NP_001235130.1">
    <property type="nucleotide sequence ID" value="NM_001248201.1"/>
</dbReference>
<dbReference type="SMR" id="Q39818"/>
<dbReference type="FunCoup" id="Q39818">
    <property type="interactions" value="121"/>
</dbReference>
<dbReference type="STRING" id="3847.Q39818"/>
<dbReference type="GeneID" id="547852"/>
<dbReference type="KEGG" id="gmx:547852"/>
<dbReference type="InParanoid" id="Q39818"/>
<dbReference type="OrthoDB" id="1431247at2759"/>
<dbReference type="Proteomes" id="UP000008827">
    <property type="component" value="Unplaced"/>
</dbReference>
<dbReference type="GO" id="GO:0005739">
    <property type="term" value="C:mitochondrion"/>
    <property type="evidence" value="ECO:0007669"/>
    <property type="project" value="UniProtKB-SubCell"/>
</dbReference>
<dbReference type="CDD" id="cd06464">
    <property type="entry name" value="ACD_sHsps-like"/>
    <property type="match status" value="1"/>
</dbReference>
<dbReference type="Gene3D" id="2.60.40.790">
    <property type="match status" value="1"/>
</dbReference>
<dbReference type="InterPro" id="IPR002068">
    <property type="entry name" value="A-crystallin/Hsp20_dom"/>
</dbReference>
<dbReference type="InterPro" id="IPR044656">
    <property type="entry name" value="HSP14.7/HSP23.5/HSP23.6-like"/>
</dbReference>
<dbReference type="InterPro" id="IPR008978">
    <property type="entry name" value="HSP20-like_chaperone"/>
</dbReference>
<dbReference type="PANTHER" id="PTHR46991">
    <property type="entry name" value="23.5 KDA HEAT SHOCK PROTEIN, MITOCHONDRIAL"/>
    <property type="match status" value="1"/>
</dbReference>
<dbReference type="PANTHER" id="PTHR46991:SF11">
    <property type="entry name" value="SMALL HEAT SHOCK PROTEIN HSPF"/>
    <property type="match status" value="1"/>
</dbReference>
<dbReference type="Pfam" id="PF00011">
    <property type="entry name" value="HSP20"/>
    <property type="match status" value="1"/>
</dbReference>
<dbReference type="SUPFAM" id="SSF49764">
    <property type="entry name" value="HSP20-like chaperones"/>
    <property type="match status" value="1"/>
</dbReference>
<dbReference type="PROSITE" id="PS01031">
    <property type="entry name" value="SHSP"/>
    <property type="match status" value="1"/>
</dbReference>
<proteinExistence type="evidence at transcript level"/>
<evidence type="ECO:0000255" key="1"/>
<evidence type="ECO:0000255" key="2">
    <source>
        <dbReference type="PROSITE-ProRule" id="PRU00285"/>
    </source>
</evidence>
<name>HS22M_SOYBN</name>